<reference key="1">
    <citation type="journal article" date="1998" name="Nature">
        <title>Deciphering the biology of Mycobacterium tuberculosis from the complete genome sequence.</title>
        <authorList>
            <person name="Cole S.T."/>
            <person name="Brosch R."/>
            <person name="Parkhill J."/>
            <person name="Garnier T."/>
            <person name="Churcher C.M."/>
            <person name="Harris D.E."/>
            <person name="Gordon S.V."/>
            <person name="Eiglmeier K."/>
            <person name="Gas S."/>
            <person name="Barry C.E. III"/>
            <person name="Tekaia F."/>
            <person name="Badcock K."/>
            <person name="Basham D."/>
            <person name="Brown D."/>
            <person name="Chillingworth T."/>
            <person name="Connor R."/>
            <person name="Davies R.M."/>
            <person name="Devlin K."/>
            <person name="Feltwell T."/>
            <person name="Gentles S."/>
            <person name="Hamlin N."/>
            <person name="Holroyd S."/>
            <person name="Hornsby T."/>
            <person name="Jagels K."/>
            <person name="Krogh A."/>
            <person name="McLean J."/>
            <person name="Moule S."/>
            <person name="Murphy L.D."/>
            <person name="Oliver S."/>
            <person name="Osborne J."/>
            <person name="Quail M.A."/>
            <person name="Rajandream M.A."/>
            <person name="Rogers J."/>
            <person name="Rutter S."/>
            <person name="Seeger K."/>
            <person name="Skelton S."/>
            <person name="Squares S."/>
            <person name="Squares R."/>
            <person name="Sulston J.E."/>
            <person name="Taylor K."/>
            <person name="Whitehead S."/>
            <person name="Barrell B.G."/>
        </authorList>
    </citation>
    <scope>NUCLEOTIDE SEQUENCE [LARGE SCALE GENOMIC DNA]</scope>
    <source>
        <strain>ATCC 25618 / H37Rv</strain>
    </source>
</reference>
<reference key="2">
    <citation type="journal article" date="2005" name="Nucleic Acids Res.">
        <title>Toxin-antitoxin loci are highly abundant in free-living but lost from host-associated prokaryotes.</title>
        <authorList>
            <person name="Pandey D.P."/>
            <person name="Gerdes K."/>
        </authorList>
    </citation>
    <scope>POSSIBLE FUNCTION</scope>
    <source>
        <strain>ATCC 25618 / H37Rv</strain>
    </source>
</reference>
<reference key="3">
    <citation type="journal article" date="2009" name="PLoS Genet.">
        <title>Comprehensive functional analysis of Mycobacterium tuberculosis toxin-antitoxin systems: implications for pathogenesis, stress responses, and evolution.</title>
        <authorList>
            <person name="Ramage H.R."/>
            <person name="Connolly L.E."/>
            <person name="Cox J.S."/>
        </authorList>
    </citation>
    <scope>EXPRESSION IN M.SMEGMATIS</scope>
    <scope>FUNCTION AS AN ANTITOXIN</scope>
    <source>
        <strain>ATCC 35801 / TMC 107 / Erdman</strain>
    </source>
</reference>
<reference key="4">
    <citation type="journal article" date="2011" name="Mol. Cell. Proteomics">
        <title>Proteogenomic analysis of Mycobacterium tuberculosis by high resolution mass spectrometry.</title>
        <authorList>
            <person name="Kelkar D.S."/>
            <person name="Kumar D."/>
            <person name="Kumar P."/>
            <person name="Balakrishnan L."/>
            <person name="Muthusamy B."/>
            <person name="Yadav A.K."/>
            <person name="Shrivastava P."/>
            <person name="Marimuthu A."/>
            <person name="Anand S."/>
            <person name="Sundaram H."/>
            <person name="Kingsbury R."/>
            <person name="Harsha H.C."/>
            <person name="Nair B."/>
            <person name="Prasad T.S."/>
            <person name="Chauhan D.S."/>
            <person name="Katoch K."/>
            <person name="Katoch V.M."/>
            <person name="Kumar P."/>
            <person name="Chaerkady R."/>
            <person name="Ramachandran S."/>
            <person name="Dash D."/>
            <person name="Pandey A."/>
        </authorList>
    </citation>
    <scope>IDENTIFICATION BY MASS SPECTROMETRY [LARGE SCALE ANALYSIS]</scope>
    <source>
        <strain>ATCC 25618 / H37Rv</strain>
    </source>
</reference>
<reference key="5">
    <citation type="journal article" date="2012" name="Protein Sci.">
        <title>The crystal structure of the Rv0301-Rv0300 VapBC-3 toxin-antitoxin complex from M. tuberculosis reveals a Mg(2+) ion in the active site and a putative RNA-binding Site.</title>
        <authorList>
            <person name="Min A.B."/>
            <person name="Miallau L."/>
            <person name="Sawaya M.R."/>
            <person name="Habel J."/>
            <person name="Cascio D."/>
            <person name="Eisenberg D."/>
        </authorList>
    </citation>
    <scope>X-RAY CRYSTALLOGRAPHY (1.49 ANGSTROMS)</scope>
    <scope>POSSIBLE MODE OF ACTION</scope>
    <scope>SUBUNIT</scope>
    <source>
        <strain>ATCC 25618 / H37Rv</strain>
    </source>
</reference>
<keyword id="KW-0002">3D-structure</keyword>
<keyword id="KW-1185">Reference proteome</keyword>
<keyword id="KW-1277">Toxin-antitoxin system</keyword>
<accession>O07227</accession>
<accession>L0T336</accession>
<evidence type="ECO:0000269" key="1">
    <source>
    </source>
</evidence>
<evidence type="ECO:0000269" key="2">
    <source>
    </source>
</evidence>
<evidence type="ECO:0000305" key="3">
    <source>
    </source>
</evidence>
<evidence type="ECO:0007829" key="4">
    <source>
        <dbReference type="PDB" id="3H87"/>
    </source>
</evidence>
<protein>
    <recommendedName>
        <fullName>Antitoxin VapB2</fullName>
    </recommendedName>
</protein>
<name>VAPB2_MYCTU</name>
<dbReference type="EMBL" id="AL123456">
    <property type="protein sequence ID" value="CCP43030.1"/>
    <property type="molecule type" value="Genomic_DNA"/>
</dbReference>
<dbReference type="PIR" id="E70523">
    <property type="entry name" value="E70523"/>
</dbReference>
<dbReference type="RefSeq" id="NP_214814.1">
    <property type="nucleotide sequence ID" value="NC_000962.3"/>
</dbReference>
<dbReference type="RefSeq" id="WP_003401563.1">
    <property type="nucleotide sequence ID" value="NZ_NVQJ01000026.1"/>
</dbReference>
<dbReference type="PDB" id="3H87">
    <property type="method" value="X-ray"/>
    <property type="resolution" value="1.49 A"/>
    <property type="chains" value="C/D=1-73"/>
</dbReference>
<dbReference type="PDBsum" id="3H87"/>
<dbReference type="SMR" id="O07227"/>
<dbReference type="STRING" id="83332.Rv0300"/>
<dbReference type="PaxDb" id="83332-Rv0300"/>
<dbReference type="DNASU" id="886588"/>
<dbReference type="GeneID" id="886588"/>
<dbReference type="KEGG" id="mtu:Rv0300"/>
<dbReference type="KEGG" id="mtv:RVBD_0300"/>
<dbReference type="TubercuList" id="Rv0300"/>
<dbReference type="eggNOG" id="ENOG5033C13">
    <property type="taxonomic scope" value="Bacteria"/>
</dbReference>
<dbReference type="InParanoid" id="O07227"/>
<dbReference type="OrthoDB" id="3215765at2"/>
<dbReference type="EvolutionaryTrace" id="O07227"/>
<dbReference type="Proteomes" id="UP000001584">
    <property type="component" value="Chromosome"/>
</dbReference>
<dbReference type="GO" id="GO:0097351">
    <property type="term" value="F:toxin sequestering activity"/>
    <property type="evidence" value="ECO:0000314"/>
    <property type="project" value="UniProtKB"/>
</dbReference>
<dbReference type="GO" id="GO:1990748">
    <property type="term" value="P:cellular detoxification"/>
    <property type="evidence" value="ECO:0000315"/>
    <property type="project" value="UniProtKB"/>
</dbReference>
<dbReference type="GO" id="GO:0006355">
    <property type="term" value="P:regulation of DNA-templated transcription"/>
    <property type="evidence" value="ECO:0007669"/>
    <property type="project" value="InterPro"/>
</dbReference>
<dbReference type="Gene3D" id="1.10.1220.10">
    <property type="entry name" value="Met repressor-like"/>
    <property type="match status" value="1"/>
</dbReference>
<dbReference type="InterPro" id="IPR013321">
    <property type="entry name" value="Arc_rbn_hlx_hlx"/>
</dbReference>
<dbReference type="InterPro" id="IPR002145">
    <property type="entry name" value="CopG"/>
</dbReference>
<dbReference type="InterPro" id="IPR010985">
    <property type="entry name" value="Ribbon_hlx_hlx"/>
</dbReference>
<dbReference type="Pfam" id="PF01402">
    <property type="entry name" value="RHH_1"/>
    <property type="match status" value="1"/>
</dbReference>
<dbReference type="SUPFAM" id="SSF47598">
    <property type="entry name" value="Ribbon-helix-helix"/>
    <property type="match status" value="1"/>
</dbReference>
<proteinExistence type="evidence at protein level"/>
<comment type="function">
    <text evidence="1 2 3">Antitoxin component of a type II toxin-antitoxin (TA) system. Upon expression in M.smegmatis neutralizes the effect of cognate toxin VapC2. The C-terminal helix of the antitoxin may obstruct the toxin's RNA-binding groove, blocking access to the active sites. Additionally, the C-terminal arginine of the antitoxin may remove Mg(2+) ions from the toxin active sites.</text>
</comment>
<comment type="subunit">
    <text evidence="2">Forms a homodimer, which binds to a toxin homodimer, which then oligomerizes further to a hetero-octamer. When bound to toxin VapC2 the toxin activity is inhibited; 1 antitoxin may suffice to inhibit toxin.</text>
</comment>
<sequence length="73" mass="8088">MSDVLIRDIPDDVLASLDAIAARLGLSRTEYIRRRLAQDAQTARVTVTAADLRRLRGAVAGLGDPELMRQAWR</sequence>
<feature type="chain" id="PRO_0000408052" description="Antitoxin VapB2">
    <location>
        <begin position="1"/>
        <end position="73"/>
    </location>
</feature>
<feature type="helix" evidence="4">
    <location>
        <begin position="11"/>
        <end position="24"/>
    </location>
</feature>
<feature type="helix" evidence="4">
    <location>
        <begin position="28"/>
        <end position="40"/>
    </location>
</feature>
<feature type="helix" evidence="4">
    <location>
        <begin position="49"/>
        <end position="58"/>
    </location>
</feature>
<feature type="helix" evidence="4">
    <location>
        <begin position="60"/>
        <end position="63"/>
    </location>
</feature>
<feature type="helix" evidence="4">
    <location>
        <begin position="65"/>
        <end position="71"/>
    </location>
</feature>
<gene>
    <name type="primary">vapB2</name>
    <name type="ordered locus">Rv0300</name>
</gene>
<organism>
    <name type="scientific">Mycobacterium tuberculosis (strain ATCC 25618 / H37Rv)</name>
    <dbReference type="NCBI Taxonomy" id="83332"/>
    <lineage>
        <taxon>Bacteria</taxon>
        <taxon>Bacillati</taxon>
        <taxon>Actinomycetota</taxon>
        <taxon>Actinomycetes</taxon>
        <taxon>Mycobacteriales</taxon>
        <taxon>Mycobacteriaceae</taxon>
        <taxon>Mycobacterium</taxon>
        <taxon>Mycobacterium tuberculosis complex</taxon>
    </lineage>
</organism>